<dbReference type="EC" id="1.14.12.26" evidence="3 4"/>
<dbReference type="EMBL" id="U78099">
    <property type="protein sequence ID" value="AAC46390.1"/>
    <property type="molecule type" value="Genomic_DNA"/>
</dbReference>
<dbReference type="SMR" id="O24676"/>
<dbReference type="BioCyc" id="MetaCyc:MONOMER-14390"/>
<dbReference type="GO" id="GO:0051537">
    <property type="term" value="F:2 iron, 2 sulfur cluster binding"/>
    <property type="evidence" value="ECO:0007669"/>
    <property type="project" value="UniProtKB-KW"/>
</dbReference>
<dbReference type="GO" id="GO:0051213">
    <property type="term" value="F:dioxygenase activity"/>
    <property type="evidence" value="ECO:0007669"/>
    <property type="project" value="UniProtKB-KW"/>
</dbReference>
<dbReference type="GO" id="GO:0005506">
    <property type="term" value="F:iron ion binding"/>
    <property type="evidence" value="ECO:0007669"/>
    <property type="project" value="InterPro"/>
</dbReference>
<dbReference type="GO" id="GO:0009056">
    <property type="term" value="P:catabolic process"/>
    <property type="evidence" value="ECO:0007669"/>
    <property type="project" value="UniProtKB-KW"/>
</dbReference>
<dbReference type="CDD" id="cd08881">
    <property type="entry name" value="RHO_alpha_C_NDO-like"/>
    <property type="match status" value="1"/>
</dbReference>
<dbReference type="CDD" id="cd03472">
    <property type="entry name" value="Rieske_RO_Alpha_BPDO_like"/>
    <property type="match status" value="1"/>
</dbReference>
<dbReference type="Gene3D" id="3.90.380.10">
    <property type="entry name" value="Naphthalene 1,2-dioxygenase Alpha Subunit, Chain A, domain 1"/>
    <property type="match status" value="1"/>
</dbReference>
<dbReference type="Gene3D" id="2.102.10.10">
    <property type="entry name" value="Rieske [2Fe-2S] iron-sulphur domain"/>
    <property type="match status" value="1"/>
</dbReference>
<dbReference type="InterPro" id="IPR043266">
    <property type="entry name" value="RHO_NdoB-like_C"/>
</dbReference>
<dbReference type="InterPro" id="IPR017941">
    <property type="entry name" value="Rieske_2Fe-2S"/>
</dbReference>
<dbReference type="InterPro" id="IPR036922">
    <property type="entry name" value="Rieske_2Fe-2S_sf"/>
</dbReference>
<dbReference type="InterPro" id="IPR015881">
    <property type="entry name" value="Ring-hydroxy_dOase_2Fe2S_BS"/>
</dbReference>
<dbReference type="InterPro" id="IPR015879">
    <property type="entry name" value="Ring_hydroxy_dOase_asu_C_dom"/>
</dbReference>
<dbReference type="InterPro" id="IPR001663">
    <property type="entry name" value="Rng_hydr_dOase-A"/>
</dbReference>
<dbReference type="PANTHER" id="PTHR43756:SF1">
    <property type="entry name" value="3-PHENYLPROPIONATE_CINNAMIC ACID DIOXYGENASE SUBUNIT ALPHA"/>
    <property type="match status" value="1"/>
</dbReference>
<dbReference type="PANTHER" id="PTHR43756">
    <property type="entry name" value="CHOLINE MONOOXYGENASE, CHLOROPLASTIC"/>
    <property type="match status" value="1"/>
</dbReference>
<dbReference type="Pfam" id="PF00355">
    <property type="entry name" value="Rieske"/>
    <property type="match status" value="1"/>
</dbReference>
<dbReference type="Pfam" id="PF00848">
    <property type="entry name" value="Ring_hydroxyl_A"/>
    <property type="match status" value="1"/>
</dbReference>
<dbReference type="PRINTS" id="PR00090">
    <property type="entry name" value="RNGDIOXGNASE"/>
</dbReference>
<dbReference type="SUPFAM" id="SSF55961">
    <property type="entry name" value="Bet v1-like"/>
    <property type="match status" value="1"/>
</dbReference>
<dbReference type="SUPFAM" id="SSF50022">
    <property type="entry name" value="ISP domain"/>
    <property type="match status" value="1"/>
</dbReference>
<dbReference type="PROSITE" id="PS51296">
    <property type="entry name" value="RIESKE"/>
    <property type="match status" value="1"/>
</dbReference>
<dbReference type="PROSITE" id="PS00570">
    <property type="entry name" value="RING_HYDROXYL_ALPHA"/>
    <property type="match status" value="1"/>
</dbReference>
<gene>
    <name evidence="6" type="primary">tecA1</name>
</gene>
<sequence>MNHTDTSPIKLRKNWNAREMQALFDERAGRTDPRIYTDEDLYQIELERVFGRSWLLLGHETQIKKPGDYTTNYMGEDPVLVVRQKDGSIAVFLNQCRHRGMRICRSDAGNAKAFTCSYHGWAYDTAGNLVNVPFEAESFPCLDKKEWSPLKARVATYKGLIFANWDHDAPDLDTYLGEAKFYMDHMLDRTEAGTEAIPGVQKWVIPCNWKLAAEQFCWDAYHAATTAHLSGILAGLPDGVELADLAPPTVGKQYRAPWGGHGSGFFIGEPDLLLAIMGPKITSYWTEGPASEKAAQRLGSVERGSKLTVEHMTVFPTCSFLLGANTVRTWHPRGPNEVEVWAFTVVDADAPDDIKEEFRRQTVRTFSAGGVFEQDDGENWVEIQHVLRGHKARSRPFNAEMSMGQTIDDDPVYPGRISNVYSDEAARGFYAQWLRMMTSSDWAALNATR</sequence>
<organism>
    <name type="scientific">Cupriavidus sp. (strain PS12)</name>
    <dbReference type="NCBI Taxonomy" id="393999"/>
    <lineage>
        <taxon>Bacteria</taxon>
        <taxon>Pseudomonadati</taxon>
        <taxon>Pseudomonadota</taxon>
        <taxon>Betaproteobacteria</taxon>
        <taxon>Burkholderiales</taxon>
        <taxon>Burkholderiaceae</taxon>
        <taxon>Cupriavidus</taxon>
    </lineage>
</organism>
<reference key="1">
    <citation type="journal article" date="1997" name="Eur. J. Biochem.">
        <title>Genetic and biochemical characterization of the broad spectrum chlorobenzene dioxygenase from Burkholderia sp. strain PS12--dechlorination of 1,2,4,5-tetrachlorobenzene.</title>
        <authorList>
            <person name="Beil S."/>
            <person name="Happe B."/>
            <person name="Timmis K.N."/>
            <person name="Pieper D.H."/>
        </authorList>
    </citation>
    <scope>NUCLEOTIDE SEQUENCE [GENOMIC DNA]</scope>
    <scope>FUNCTION</scope>
    <scope>CATALYTIC ACTIVITY</scope>
    <scope>SUBUNIT</scope>
    <source>
        <strain>PS12</strain>
    </source>
</reference>
<reference key="2">
    <citation type="journal article" date="1998" name="J. Bacteriol.">
        <title>Identification of chlorobenzene dioxygenase sequence elements involved in dechlorination of 1,2,4,5-tetrachlorobenzene.</title>
        <authorList>
            <person name="Beil S."/>
            <person name="Mason J.R."/>
            <person name="Timmis K.N."/>
            <person name="Pieper D.H."/>
        </authorList>
    </citation>
    <scope>FUNCTION</scope>
    <source>
        <strain>PS12</strain>
    </source>
</reference>
<reference key="3">
    <citation type="journal article" date="2001" name="Appl. Environ. Microbiol.">
        <title>Transformation of chlorinated benzenes and toluenes by Ralstonia sp. strain PS12 tecA (tetrachlorobenzene dioxygenase) and tecB (chlorobenzene dihydrodiol dehydrogenase) gene products.</title>
        <authorList>
            <person name="Pollmann K."/>
            <person name="Beil S."/>
            <person name="Pieper D.H."/>
        </authorList>
    </citation>
    <scope>FUNCTION</scope>
    <scope>CATALYTIC ACTIVITY</scope>
    <source>
        <strain>PS12</strain>
    </source>
</reference>
<name>TECA1_CUPXP</name>
<keyword id="KW-0001">2Fe-2S</keyword>
<keyword id="KW-0058">Aromatic hydrocarbons catabolism</keyword>
<keyword id="KW-0223">Dioxygenase</keyword>
<keyword id="KW-0408">Iron</keyword>
<keyword id="KW-0411">Iron-sulfur</keyword>
<keyword id="KW-0479">Metal-binding</keyword>
<keyword id="KW-0520">NAD</keyword>
<keyword id="KW-0560">Oxidoreductase</keyword>
<feature type="chain" id="PRO_0000453515" description="Chlorobenzene dioxygenase subunit alpha">
    <location>
        <begin position="1"/>
        <end position="449"/>
    </location>
</feature>
<feature type="domain" description="Rieske" evidence="2">
    <location>
        <begin position="54"/>
        <end position="163"/>
    </location>
</feature>
<feature type="binding site" evidence="2">
    <location>
        <position position="96"/>
    </location>
    <ligand>
        <name>[2Fe-2S] cluster</name>
        <dbReference type="ChEBI" id="CHEBI:190135"/>
    </ligand>
</feature>
<feature type="binding site" evidence="2">
    <location>
        <position position="98"/>
    </location>
    <ligand>
        <name>[2Fe-2S] cluster</name>
        <dbReference type="ChEBI" id="CHEBI:190135"/>
    </ligand>
</feature>
<feature type="binding site" evidence="2">
    <location>
        <position position="116"/>
    </location>
    <ligand>
        <name>[2Fe-2S] cluster</name>
        <dbReference type="ChEBI" id="CHEBI:190135"/>
    </ligand>
</feature>
<feature type="binding site" evidence="2">
    <location>
        <position position="119"/>
    </location>
    <ligand>
        <name>[2Fe-2S] cluster</name>
        <dbReference type="ChEBI" id="CHEBI:190135"/>
    </ligand>
</feature>
<feature type="binding site" evidence="1">
    <location>
        <position position="222"/>
    </location>
    <ligand>
        <name>Fe cation</name>
        <dbReference type="ChEBI" id="CHEBI:24875"/>
    </ligand>
</feature>
<feature type="binding site" evidence="1">
    <location>
        <position position="228"/>
    </location>
    <ligand>
        <name>Fe cation</name>
        <dbReference type="ChEBI" id="CHEBI:24875"/>
    </ligand>
</feature>
<feature type="binding site" evidence="1">
    <location>
        <position position="376"/>
    </location>
    <ligand>
        <name>Fe cation</name>
        <dbReference type="ChEBI" id="CHEBI:24875"/>
    </ligand>
</feature>
<comment type="function">
    <text evidence="3 4 5">Part of the oxygenase component of the chlorobenzene dioxygenase system that catalyzes the dihydroxylation of a range of aromatic compounds, including chlorinated benzenes and toluenes, and dinuclear aromatics such as biphenyl and dibenzo-p-dioxin (PubMed:11526005, PubMed:9249026, PubMed:9791099). The alpha subunit is responsible for substrate specificity (PubMed:9791099).</text>
</comment>
<comment type="catalytic activity">
    <reaction evidence="3 4">
        <text>chlorobenzene + NADH + O2 + H(+) = (1R,2R)-3-chlorocyclohexa-3,5-diene-1,2-diol + NAD(+)</text>
        <dbReference type="Rhea" id="RHEA:57512"/>
        <dbReference type="ChEBI" id="CHEBI:15378"/>
        <dbReference type="ChEBI" id="CHEBI:15379"/>
        <dbReference type="ChEBI" id="CHEBI:19981"/>
        <dbReference type="ChEBI" id="CHEBI:28097"/>
        <dbReference type="ChEBI" id="CHEBI:57540"/>
        <dbReference type="ChEBI" id="CHEBI:57945"/>
        <dbReference type="EC" id="1.14.12.26"/>
    </reaction>
</comment>
<comment type="cofactor">
    <cofactor evidence="2">
        <name>[2Fe-2S] cluster</name>
        <dbReference type="ChEBI" id="CHEBI:190135"/>
    </cofactor>
    <text evidence="2">Binds 1 [2Fe-2S] cluster per subunit.</text>
</comment>
<comment type="cofactor">
    <cofactor evidence="1">
        <name>Fe cation</name>
        <dbReference type="ChEBI" id="CHEBI:24875"/>
    </cofactor>
    <text evidence="1">Binds 1 Fe cation per subunit.</text>
</comment>
<comment type="pathway">
    <text evidence="7">Aromatic compound metabolism.</text>
</comment>
<comment type="subunit">
    <text evidence="8">This dioxygenase system consists of four proteins: the two subunits of the oxygenase component (TecA1 and TecA2), a ferredoxin (TecA3) and a ferredoxin reductase (TecA4).</text>
</comment>
<comment type="similarity">
    <text evidence="7">Belongs to the bacterial ring-hydroxylating dioxygenase alpha subunit family.</text>
</comment>
<accession>O24676</accession>
<proteinExistence type="evidence at protein level"/>
<protein>
    <recommendedName>
        <fullName evidence="7">Chlorobenzene dioxygenase subunit alpha</fullName>
        <ecNumber evidence="3 4">1.14.12.26</ecNumber>
    </recommendedName>
</protein>
<evidence type="ECO:0000250" key="1">
    <source>
        <dbReference type="UniProtKB" id="Q53122"/>
    </source>
</evidence>
<evidence type="ECO:0000255" key="2">
    <source>
        <dbReference type="PROSITE-ProRule" id="PRU00628"/>
    </source>
</evidence>
<evidence type="ECO:0000269" key="3">
    <source>
    </source>
</evidence>
<evidence type="ECO:0000269" key="4">
    <source>
    </source>
</evidence>
<evidence type="ECO:0000269" key="5">
    <source>
    </source>
</evidence>
<evidence type="ECO:0000303" key="6">
    <source>
    </source>
</evidence>
<evidence type="ECO:0000305" key="7"/>
<evidence type="ECO:0000305" key="8">
    <source>
    </source>
</evidence>